<organism>
    <name type="scientific">Vibrio vulnificus (strain CMCP6)</name>
    <dbReference type="NCBI Taxonomy" id="216895"/>
    <lineage>
        <taxon>Bacteria</taxon>
        <taxon>Pseudomonadati</taxon>
        <taxon>Pseudomonadota</taxon>
        <taxon>Gammaproteobacteria</taxon>
        <taxon>Vibrionales</taxon>
        <taxon>Vibrionaceae</taxon>
        <taxon>Vibrio</taxon>
    </lineage>
</organism>
<protein>
    <recommendedName>
        <fullName evidence="1">Adenylate kinase</fullName>
        <shortName evidence="1">AK</shortName>
        <ecNumber evidence="1">2.7.4.3</ecNumber>
    </recommendedName>
    <alternativeName>
        <fullName evidence="1">ATP-AMP transphosphorylase</fullName>
    </alternativeName>
    <alternativeName>
        <fullName evidence="1">ATP:AMP phosphotransferase</fullName>
    </alternativeName>
    <alternativeName>
        <fullName evidence="1">Adenylate monophosphate kinase</fullName>
    </alternativeName>
</protein>
<proteinExistence type="inferred from homology"/>
<reference key="1">
    <citation type="submission" date="2002-12" db="EMBL/GenBank/DDBJ databases">
        <title>Complete genome sequence of Vibrio vulnificus CMCP6.</title>
        <authorList>
            <person name="Rhee J.H."/>
            <person name="Kim S.Y."/>
            <person name="Chung S.S."/>
            <person name="Kim J.J."/>
            <person name="Moon Y.H."/>
            <person name="Jeong H."/>
            <person name="Choy H.E."/>
        </authorList>
    </citation>
    <scope>NUCLEOTIDE SEQUENCE [LARGE SCALE GENOMIC DNA]</scope>
    <source>
        <strain>CMCP6</strain>
    </source>
</reference>
<name>KAD_VIBVU</name>
<gene>
    <name evidence="1" type="primary">adk</name>
    <name type="ordered locus">VV1_0188</name>
</gene>
<comment type="function">
    <text evidence="1">Catalyzes the reversible transfer of the terminal phosphate group between ATP and AMP. Plays an important role in cellular energy homeostasis and in adenine nucleotide metabolism.</text>
</comment>
<comment type="catalytic activity">
    <reaction evidence="1">
        <text>AMP + ATP = 2 ADP</text>
        <dbReference type="Rhea" id="RHEA:12973"/>
        <dbReference type="ChEBI" id="CHEBI:30616"/>
        <dbReference type="ChEBI" id="CHEBI:456215"/>
        <dbReference type="ChEBI" id="CHEBI:456216"/>
        <dbReference type="EC" id="2.7.4.3"/>
    </reaction>
</comment>
<comment type="pathway">
    <text evidence="1">Purine metabolism; AMP biosynthesis via salvage pathway; AMP from ADP: step 1/1.</text>
</comment>
<comment type="subunit">
    <text evidence="1">Monomer.</text>
</comment>
<comment type="subcellular location">
    <subcellularLocation>
        <location evidence="1">Cytoplasm</location>
    </subcellularLocation>
</comment>
<comment type="domain">
    <text evidence="1">Consists of three domains, a large central CORE domain and two small peripheral domains, NMPbind and LID, which undergo movements during catalysis. The LID domain closes over the site of phosphoryl transfer upon ATP binding. Assembling and dissambling the active center during each catalytic cycle provides an effective means to prevent ATP hydrolysis.</text>
</comment>
<comment type="similarity">
    <text evidence="1">Belongs to the adenylate kinase family.</text>
</comment>
<evidence type="ECO:0000255" key="1">
    <source>
        <dbReference type="HAMAP-Rule" id="MF_00235"/>
    </source>
</evidence>
<keyword id="KW-0067">ATP-binding</keyword>
<keyword id="KW-0963">Cytoplasm</keyword>
<keyword id="KW-0418">Kinase</keyword>
<keyword id="KW-0545">Nucleotide biosynthesis</keyword>
<keyword id="KW-0547">Nucleotide-binding</keyword>
<keyword id="KW-0808">Transferase</keyword>
<feature type="chain" id="PRO_0000158884" description="Adenylate kinase">
    <location>
        <begin position="1"/>
        <end position="214"/>
    </location>
</feature>
<feature type="region of interest" description="NMP" evidence="1">
    <location>
        <begin position="30"/>
        <end position="59"/>
    </location>
</feature>
<feature type="region of interest" description="LID" evidence="1">
    <location>
        <begin position="122"/>
        <end position="159"/>
    </location>
</feature>
<feature type="binding site" evidence="1">
    <location>
        <begin position="10"/>
        <end position="15"/>
    </location>
    <ligand>
        <name>ATP</name>
        <dbReference type="ChEBI" id="CHEBI:30616"/>
    </ligand>
</feature>
<feature type="binding site" evidence="1">
    <location>
        <position position="31"/>
    </location>
    <ligand>
        <name>AMP</name>
        <dbReference type="ChEBI" id="CHEBI:456215"/>
    </ligand>
</feature>
<feature type="binding site" evidence="1">
    <location>
        <position position="36"/>
    </location>
    <ligand>
        <name>AMP</name>
        <dbReference type="ChEBI" id="CHEBI:456215"/>
    </ligand>
</feature>
<feature type="binding site" evidence="1">
    <location>
        <begin position="57"/>
        <end position="59"/>
    </location>
    <ligand>
        <name>AMP</name>
        <dbReference type="ChEBI" id="CHEBI:456215"/>
    </ligand>
</feature>
<feature type="binding site" evidence="1">
    <location>
        <begin position="85"/>
        <end position="88"/>
    </location>
    <ligand>
        <name>AMP</name>
        <dbReference type="ChEBI" id="CHEBI:456215"/>
    </ligand>
</feature>
<feature type="binding site" evidence="1">
    <location>
        <position position="92"/>
    </location>
    <ligand>
        <name>AMP</name>
        <dbReference type="ChEBI" id="CHEBI:456215"/>
    </ligand>
</feature>
<feature type="binding site" evidence="1">
    <location>
        <position position="123"/>
    </location>
    <ligand>
        <name>ATP</name>
        <dbReference type="ChEBI" id="CHEBI:30616"/>
    </ligand>
</feature>
<feature type="binding site" evidence="1">
    <location>
        <begin position="132"/>
        <end position="133"/>
    </location>
    <ligand>
        <name>ATP</name>
        <dbReference type="ChEBI" id="CHEBI:30616"/>
    </ligand>
</feature>
<feature type="binding site" evidence="1">
    <location>
        <position position="156"/>
    </location>
    <ligand>
        <name>AMP</name>
        <dbReference type="ChEBI" id="CHEBI:456215"/>
    </ligand>
</feature>
<feature type="binding site" evidence="1">
    <location>
        <position position="167"/>
    </location>
    <ligand>
        <name>AMP</name>
        <dbReference type="ChEBI" id="CHEBI:456215"/>
    </ligand>
</feature>
<feature type="binding site" evidence="1">
    <location>
        <position position="200"/>
    </location>
    <ligand>
        <name>ATP</name>
        <dbReference type="ChEBI" id="CHEBI:30616"/>
    </ligand>
</feature>
<accession>Q8DFM1</accession>
<dbReference type="EC" id="2.7.4.3" evidence="1"/>
<dbReference type="EMBL" id="AE016795">
    <property type="protein sequence ID" value="AAO08725.1"/>
    <property type="molecule type" value="Genomic_DNA"/>
</dbReference>
<dbReference type="RefSeq" id="WP_011078303.1">
    <property type="nucleotide sequence ID" value="NC_004459.3"/>
</dbReference>
<dbReference type="SMR" id="Q8DFM1"/>
<dbReference type="KEGG" id="vvu:VV1_0188"/>
<dbReference type="HOGENOM" id="CLU_032354_1_2_6"/>
<dbReference type="UniPathway" id="UPA00588">
    <property type="reaction ID" value="UER00649"/>
</dbReference>
<dbReference type="Proteomes" id="UP000002275">
    <property type="component" value="Chromosome 1"/>
</dbReference>
<dbReference type="GO" id="GO:0005737">
    <property type="term" value="C:cytoplasm"/>
    <property type="evidence" value="ECO:0007669"/>
    <property type="project" value="UniProtKB-SubCell"/>
</dbReference>
<dbReference type="GO" id="GO:0004017">
    <property type="term" value="F:adenylate kinase activity"/>
    <property type="evidence" value="ECO:0007669"/>
    <property type="project" value="UniProtKB-UniRule"/>
</dbReference>
<dbReference type="GO" id="GO:0005524">
    <property type="term" value="F:ATP binding"/>
    <property type="evidence" value="ECO:0007669"/>
    <property type="project" value="UniProtKB-UniRule"/>
</dbReference>
<dbReference type="GO" id="GO:0044209">
    <property type="term" value="P:AMP salvage"/>
    <property type="evidence" value="ECO:0007669"/>
    <property type="project" value="UniProtKB-UniRule"/>
</dbReference>
<dbReference type="CDD" id="cd01428">
    <property type="entry name" value="ADK"/>
    <property type="match status" value="1"/>
</dbReference>
<dbReference type="FunFam" id="3.40.50.300:FF:000106">
    <property type="entry name" value="Adenylate kinase mitochondrial"/>
    <property type="match status" value="1"/>
</dbReference>
<dbReference type="Gene3D" id="3.40.50.300">
    <property type="entry name" value="P-loop containing nucleotide triphosphate hydrolases"/>
    <property type="match status" value="1"/>
</dbReference>
<dbReference type="HAMAP" id="MF_00235">
    <property type="entry name" value="Adenylate_kinase_Adk"/>
    <property type="match status" value="1"/>
</dbReference>
<dbReference type="InterPro" id="IPR006259">
    <property type="entry name" value="Adenyl_kin_sub"/>
</dbReference>
<dbReference type="InterPro" id="IPR000850">
    <property type="entry name" value="Adenylat/UMP-CMP_kin"/>
</dbReference>
<dbReference type="InterPro" id="IPR033690">
    <property type="entry name" value="Adenylat_kinase_CS"/>
</dbReference>
<dbReference type="InterPro" id="IPR007862">
    <property type="entry name" value="Adenylate_kinase_lid-dom"/>
</dbReference>
<dbReference type="InterPro" id="IPR027417">
    <property type="entry name" value="P-loop_NTPase"/>
</dbReference>
<dbReference type="NCBIfam" id="TIGR01351">
    <property type="entry name" value="adk"/>
    <property type="match status" value="1"/>
</dbReference>
<dbReference type="NCBIfam" id="NF001379">
    <property type="entry name" value="PRK00279.1-1"/>
    <property type="match status" value="1"/>
</dbReference>
<dbReference type="NCBIfam" id="NF001380">
    <property type="entry name" value="PRK00279.1-2"/>
    <property type="match status" value="1"/>
</dbReference>
<dbReference type="NCBIfam" id="NF001381">
    <property type="entry name" value="PRK00279.1-3"/>
    <property type="match status" value="1"/>
</dbReference>
<dbReference type="PANTHER" id="PTHR23359">
    <property type="entry name" value="NUCLEOTIDE KINASE"/>
    <property type="match status" value="1"/>
</dbReference>
<dbReference type="Pfam" id="PF00406">
    <property type="entry name" value="ADK"/>
    <property type="match status" value="1"/>
</dbReference>
<dbReference type="Pfam" id="PF05191">
    <property type="entry name" value="ADK_lid"/>
    <property type="match status" value="1"/>
</dbReference>
<dbReference type="PRINTS" id="PR00094">
    <property type="entry name" value="ADENYLTKNASE"/>
</dbReference>
<dbReference type="SUPFAM" id="SSF52540">
    <property type="entry name" value="P-loop containing nucleoside triphosphate hydrolases"/>
    <property type="match status" value="1"/>
</dbReference>
<dbReference type="PROSITE" id="PS00113">
    <property type="entry name" value="ADENYLATE_KINASE"/>
    <property type="match status" value="1"/>
</dbReference>
<sequence>MRIILLGAPGAGKGTQAQFIMEKYGIPQISTGDMLRAAIKAGTELGKQAKAVIDAGQLVSDEIILGLIKERIAQEDCAKGFLLDGFPRTIPQADGLKEMGVAVDYVIEFDVADDVIVERMAGRRAHLPSGRTYHVVYNPPKVEGKDDVTGEDLVVRDDDKEETVRARLGVYHSQTAPLIEYYGKEAAEGNTKYLKFDGTKQVAQVSADIEKALA</sequence>